<comment type="function">
    <text evidence="1">Catalyzes the oxidation of 5,10-methylenetetrahydrofolate to 5,10-methenyltetrahydrofolate and then the hydrolysis of 5,10-methenyltetrahydrofolate to 10-formyltetrahydrofolate.</text>
</comment>
<comment type="catalytic activity">
    <reaction evidence="1">
        <text>(6R)-5,10-methylene-5,6,7,8-tetrahydrofolate + NADP(+) = (6R)-5,10-methenyltetrahydrofolate + NADPH</text>
        <dbReference type="Rhea" id="RHEA:22812"/>
        <dbReference type="ChEBI" id="CHEBI:15636"/>
        <dbReference type="ChEBI" id="CHEBI:57455"/>
        <dbReference type="ChEBI" id="CHEBI:57783"/>
        <dbReference type="ChEBI" id="CHEBI:58349"/>
        <dbReference type="EC" id="1.5.1.5"/>
    </reaction>
</comment>
<comment type="catalytic activity">
    <reaction evidence="1">
        <text>(6R)-5,10-methenyltetrahydrofolate + H2O = (6R)-10-formyltetrahydrofolate + H(+)</text>
        <dbReference type="Rhea" id="RHEA:23700"/>
        <dbReference type="ChEBI" id="CHEBI:15377"/>
        <dbReference type="ChEBI" id="CHEBI:15378"/>
        <dbReference type="ChEBI" id="CHEBI:57455"/>
        <dbReference type="ChEBI" id="CHEBI:195366"/>
        <dbReference type="EC" id="3.5.4.9"/>
    </reaction>
</comment>
<comment type="pathway">
    <text evidence="1">One-carbon metabolism; tetrahydrofolate interconversion.</text>
</comment>
<comment type="subunit">
    <text evidence="1">Homodimer.</text>
</comment>
<comment type="similarity">
    <text evidence="1">Belongs to the tetrahydrofolate dehydrogenase/cyclohydrolase family.</text>
</comment>
<evidence type="ECO:0000255" key="1">
    <source>
        <dbReference type="HAMAP-Rule" id="MF_01576"/>
    </source>
</evidence>
<gene>
    <name evidence="1" type="primary">folD</name>
    <name type="ordered locus">Mpal_0744</name>
</gene>
<organism>
    <name type="scientific">Methanosphaerula palustris (strain ATCC BAA-1556 / DSM 19958 / E1-9c)</name>
    <dbReference type="NCBI Taxonomy" id="521011"/>
    <lineage>
        <taxon>Archaea</taxon>
        <taxon>Methanobacteriati</taxon>
        <taxon>Methanobacteriota</taxon>
        <taxon>Stenosarchaea group</taxon>
        <taxon>Methanomicrobia</taxon>
        <taxon>Methanomicrobiales</taxon>
        <taxon>Methanoregulaceae</taxon>
        <taxon>Methanosphaerula</taxon>
    </lineage>
</organism>
<accession>B8GG34</accession>
<protein>
    <recommendedName>
        <fullName evidence="1">Bifunctional protein FolD</fullName>
    </recommendedName>
    <domain>
        <recommendedName>
            <fullName evidence="1">Methylenetetrahydrofolate dehydrogenase</fullName>
            <ecNumber evidence="1">1.5.1.5</ecNumber>
        </recommendedName>
    </domain>
    <domain>
        <recommendedName>
            <fullName evidence="1">Methenyltetrahydrofolate cyclohydrolase</fullName>
            <ecNumber evidence="1">3.5.4.9</ecNumber>
        </recommendedName>
    </domain>
</protein>
<keyword id="KW-0028">Amino-acid biosynthesis</keyword>
<keyword id="KW-0368">Histidine biosynthesis</keyword>
<keyword id="KW-0378">Hydrolase</keyword>
<keyword id="KW-0486">Methionine biosynthesis</keyword>
<keyword id="KW-0511">Multifunctional enzyme</keyword>
<keyword id="KW-0521">NADP</keyword>
<keyword id="KW-0554">One-carbon metabolism</keyword>
<keyword id="KW-0560">Oxidoreductase</keyword>
<keyword id="KW-0658">Purine biosynthesis</keyword>
<keyword id="KW-1185">Reference proteome</keyword>
<proteinExistence type="inferred from homology"/>
<feature type="chain" id="PRO_1000185621" description="Bifunctional protein FolD">
    <location>
        <begin position="1"/>
        <end position="280"/>
    </location>
</feature>
<feature type="binding site" evidence="1">
    <location>
        <begin position="159"/>
        <end position="161"/>
    </location>
    <ligand>
        <name>NADP(+)</name>
        <dbReference type="ChEBI" id="CHEBI:58349"/>
    </ligand>
</feature>
<feature type="binding site" evidence="1">
    <location>
        <position position="184"/>
    </location>
    <ligand>
        <name>NADP(+)</name>
        <dbReference type="ChEBI" id="CHEBI:58349"/>
    </ligand>
</feature>
<feature type="binding site" evidence="1">
    <location>
        <position position="225"/>
    </location>
    <ligand>
        <name>NADP(+)</name>
        <dbReference type="ChEBI" id="CHEBI:58349"/>
    </ligand>
</feature>
<sequence>MIIDGKRVSEKRLELIKEEIDESGLYPRLATVIAGDNPASLLYVQMKHRACERVHIGSISITLPGDSTTAKVLETIDRLNKDPEINGILVQLPLPAGVDTEQVIEAILPEKDVDGFHPFNLGKLLGGSPTFAPCTPLGIMTLLKEYKIDPAGKRAVVIGRSIDVGRPMAALLINANATVTVCHSRTKDLAAELRKADIIVSAMGKARFITGDMVSGDAVVIDVGINHVDGKLCGDVDFASVSEKVAAITPVPGGVGPMTIATLMENTFKAAKMQSCRTVH</sequence>
<name>FOLD_METPE</name>
<reference key="1">
    <citation type="journal article" date="2015" name="Genome Announc.">
        <title>Complete Genome Sequence of Methanosphaerula palustris E1-9CT, a Hydrogenotrophic Methanogen Isolated from a Minerotrophic Fen Peatland.</title>
        <authorList>
            <person name="Cadillo-Quiroz H."/>
            <person name="Browne P."/>
            <person name="Kyrpides N."/>
            <person name="Woyke T."/>
            <person name="Goodwin L."/>
            <person name="Detter C."/>
            <person name="Yavitt J.B."/>
            <person name="Zinder S.H."/>
        </authorList>
    </citation>
    <scope>NUCLEOTIDE SEQUENCE [LARGE SCALE GENOMIC DNA]</scope>
    <source>
        <strain>ATCC BAA-1556 / DSM 19958 / E1-9c</strain>
    </source>
</reference>
<dbReference type="EC" id="1.5.1.5" evidence="1"/>
<dbReference type="EC" id="3.5.4.9" evidence="1"/>
<dbReference type="EMBL" id="CP001338">
    <property type="protein sequence ID" value="ACL16108.1"/>
    <property type="molecule type" value="Genomic_DNA"/>
</dbReference>
<dbReference type="RefSeq" id="WP_012617427.1">
    <property type="nucleotide sequence ID" value="NC_011832.1"/>
</dbReference>
<dbReference type="SMR" id="B8GG34"/>
<dbReference type="STRING" id="521011.Mpal_0744"/>
<dbReference type="GeneID" id="7270479"/>
<dbReference type="KEGG" id="mpl:Mpal_0744"/>
<dbReference type="eggNOG" id="arCOG04538">
    <property type="taxonomic scope" value="Archaea"/>
</dbReference>
<dbReference type="HOGENOM" id="CLU_034045_2_1_2"/>
<dbReference type="OrthoDB" id="9455at2157"/>
<dbReference type="UniPathway" id="UPA00193"/>
<dbReference type="Proteomes" id="UP000002457">
    <property type="component" value="Chromosome"/>
</dbReference>
<dbReference type="GO" id="GO:0005829">
    <property type="term" value="C:cytosol"/>
    <property type="evidence" value="ECO:0007669"/>
    <property type="project" value="TreeGrafter"/>
</dbReference>
<dbReference type="GO" id="GO:0004477">
    <property type="term" value="F:methenyltetrahydrofolate cyclohydrolase activity"/>
    <property type="evidence" value="ECO:0007669"/>
    <property type="project" value="UniProtKB-UniRule"/>
</dbReference>
<dbReference type="GO" id="GO:0004488">
    <property type="term" value="F:methylenetetrahydrofolate dehydrogenase (NADP+) activity"/>
    <property type="evidence" value="ECO:0007669"/>
    <property type="project" value="UniProtKB-UniRule"/>
</dbReference>
<dbReference type="GO" id="GO:0000105">
    <property type="term" value="P:L-histidine biosynthetic process"/>
    <property type="evidence" value="ECO:0007669"/>
    <property type="project" value="UniProtKB-KW"/>
</dbReference>
<dbReference type="GO" id="GO:0009086">
    <property type="term" value="P:methionine biosynthetic process"/>
    <property type="evidence" value="ECO:0007669"/>
    <property type="project" value="UniProtKB-KW"/>
</dbReference>
<dbReference type="GO" id="GO:0006164">
    <property type="term" value="P:purine nucleotide biosynthetic process"/>
    <property type="evidence" value="ECO:0007669"/>
    <property type="project" value="UniProtKB-KW"/>
</dbReference>
<dbReference type="GO" id="GO:0035999">
    <property type="term" value="P:tetrahydrofolate interconversion"/>
    <property type="evidence" value="ECO:0007669"/>
    <property type="project" value="UniProtKB-UniRule"/>
</dbReference>
<dbReference type="CDD" id="cd01080">
    <property type="entry name" value="NAD_bind_m-THF_DH_Cyclohyd"/>
    <property type="match status" value="1"/>
</dbReference>
<dbReference type="FunFam" id="3.40.50.720:FF:000094">
    <property type="entry name" value="Bifunctional protein FolD"/>
    <property type="match status" value="1"/>
</dbReference>
<dbReference type="FunFam" id="3.40.50.10860:FF:000005">
    <property type="entry name" value="C-1-tetrahydrofolate synthase, cytoplasmic, putative"/>
    <property type="match status" value="1"/>
</dbReference>
<dbReference type="Gene3D" id="3.40.50.10860">
    <property type="entry name" value="Leucine Dehydrogenase, chain A, domain 1"/>
    <property type="match status" value="1"/>
</dbReference>
<dbReference type="Gene3D" id="3.40.50.720">
    <property type="entry name" value="NAD(P)-binding Rossmann-like Domain"/>
    <property type="match status" value="1"/>
</dbReference>
<dbReference type="HAMAP" id="MF_01576">
    <property type="entry name" value="THF_DHG_CYH"/>
    <property type="match status" value="1"/>
</dbReference>
<dbReference type="InterPro" id="IPR046346">
    <property type="entry name" value="Aminoacid_DH-like_N_sf"/>
</dbReference>
<dbReference type="InterPro" id="IPR036291">
    <property type="entry name" value="NAD(P)-bd_dom_sf"/>
</dbReference>
<dbReference type="InterPro" id="IPR000672">
    <property type="entry name" value="THF_DH/CycHdrlase"/>
</dbReference>
<dbReference type="InterPro" id="IPR020630">
    <property type="entry name" value="THF_DH/CycHdrlase_cat_dom"/>
</dbReference>
<dbReference type="InterPro" id="IPR020867">
    <property type="entry name" value="THF_DH/CycHdrlase_CS"/>
</dbReference>
<dbReference type="InterPro" id="IPR020631">
    <property type="entry name" value="THF_DH/CycHdrlase_NAD-bd_dom"/>
</dbReference>
<dbReference type="NCBIfam" id="NF010775">
    <property type="entry name" value="PRK14178.1"/>
    <property type="match status" value="1"/>
</dbReference>
<dbReference type="PANTHER" id="PTHR48099:SF5">
    <property type="entry name" value="C-1-TETRAHYDROFOLATE SYNTHASE, CYTOPLASMIC"/>
    <property type="match status" value="1"/>
</dbReference>
<dbReference type="PANTHER" id="PTHR48099">
    <property type="entry name" value="C-1-TETRAHYDROFOLATE SYNTHASE, CYTOPLASMIC-RELATED"/>
    <property type="match status" value="1"/>
</dbReference>
<dbReference type="Pfam" id="PF00763">
    <property type="entry name" value="THF_DHG_CYH"/>
    <property type="match status" value="1"/>
</dbReference>
<dbReference type="Pfam" id="PF02882">
    <property type="entry name" value="THF_DHG_CYH_C"/>
    <property type="match status" value="1"/>
</dbReference>
<dbReference type="PRINTS" id="PR00085">
    <property type="entry name" value="THFDHDRGNASE"/>
</dbReference>
<dbReference type="SUPFAM" id="SSF53223">
    <property type="entry name" value="Aminoacid dehydrogenase-like, N-terminal domain"/>
    <property type="match status" value="1"/>
</dbReference>
<dbReference type="SUPFAM" id="SSF51735">
    <property type="entry name" value="NAD(P)-binding Rossmann-fold domains"/>
    <property type="match status" value="1"/>
</dbReference>
<dbReference type="PROSITE" id="PS00766">
    <property type="entry name" value="THF_DHG_CYH_1"/>
    <property type="match status" value="1"/>
</dbReference>
<dbReference type="PROSITE" id="PS00767">
    <property type="entry name" value="THF_DHG_CYH_2"/>
    <property type="match status" value="1"/>
</dbReference>